<sequence length="272" mass="29080">MSDILAKIEAYKREEIAAAKQACPLSELEARAREASAPRGFVKALRSKHASGDYALIAEVKKASPSKGLIRADFDPPVLARAYEAGGAACLSVLTDTPSFQGHLDFMVAARAATALPVLRKDFMFDTYQVIEARAHGADCILIIMAALDDAAAADIEMAALDSGMDVLIEIHDRAELDRALKLRSPMIGINNRNLRTFETTLATSESLAPLVPKERLLVGESGIFTPADLSRLAQVDIQTFLVGESLMRQADVTAATRALLARNAASASAAE</sequence>
<gene>
    <name evidence="1" type="primary">trpC</name>
    <name type="ordered locus">BRADO4110</name>
</gene>
<comment type="catalytic activity">
    <reaction evidence="1">
        <text>1-(2-carboxyphenylamino)-1-deoxy-D-ribulose 5-phosphate + H(+) = (1S,2R)-1-C-(indol-3-yl)glycerol 3-phosphate + CO2 + H2O</text>
        <dbReference type="Rhea" id="RHEA:23476"/>
        <dbReference type="ChEBI" id="CHEBI:15377"/>
        <dbReference type="ChEBI" id="CHEBI:15378"/>
        <dbReference type="ChEBI" id="CHEBI:16526"/>
        <dbReference type="ChEBI" id="CHEBI:58613"/>
        <dbReference type="ChEBI" id="CHEBI:58866"/>
        <dbReference type="EC" id="4.1.1.48"/>
    </reaction>
</comment>
<comment type="pathway">
    <text evidence="1">Amino-acid biosynthesis; L-tryptophan biosynthesis; L-tryptophan from chorismate: step 4/5.</text>
</comment>
<comment type="similarity">
    <text evidence="1">Belongs to the TrpC family.</text>
</comment>
<protein>
    <recommendedName>
        <fullName evidence="1">Indole-3-glycerol phosphate synthase</fullName>
        <shortName evidence="1">IGPS</shortName>
        <ecNumber evidence="1">4.1.1.48</ecNumber>
    </recommendedName>
</protein>
<proteinExistence type="inferred from homology"/>
<keyword id="KW-0028">Amino-acid biosynthesis</keyword>
<keyword id="KW-0057">Aromatic amino acid biosynthesis</keyword>
<keyword id="KW-0210">Decarboxylase</keyword>
<keyword id="KW-0456">Lyase</keyword>
<keyword id="KW-1185">Reference proteome</keyword>
<keyword id="KW-0822">Tryptophan biosynthesis</keyword>
<evidence type="ECO:0000255" key="1">
    <source>
        <dbReference type="HAMAP-Rule" id="MF_00134"/>
    </source>
</evidence>
<reference key="1">
    <citation type="journal article" date="2007" name="Science">
        <title>Legumes symbioses: absence of nod genes in photosynthetic bradyrhizobia.</title>
        <authorList>
            <person name="Giraud E."/>
            <person name="Moulin L."/>
            <person name="Vallenet D."/>
            <person name="Barbe V."/>
            <person name="Cytryn E."/>
            <person name="Avarre J.-C."/>
            <person name="Jaubert M."/>
            <person name="Simon D."/>
            <person name="Cartieaux F."/>
            <person name="Prin Y."/>
            <person name="Bena G."/>
            <person name="Hannibal L."/>
            <person name="Fardoux J."/>
            <person name="Kojadinovic M."/>
            <person name="Vuillet L."/>
            <person name="Lajus A."/>
            <person name="Cruveiller S."/>
            <person name="Rouy Z."/>
            <person name="Mangenot S."/>
            <person name="Segurens B."/>
            <person name="Dossat C."/>
            <person name="Franck W.L."/>
            <person name="Chang W.-S."/>
            <person name="Saunders E."/>
            <person name="Bruce D."/>
            <person name="Richardson P."/>
            <person name="Normand P."/>
            <person name="Dreyfus B."/>
            <person name="Pignol D."/>
            <person name="Stacey G."/>
            <person name="Emerich D."/>
            <person name="Vermeglio A."/>
            <person name="Medigue C."/>
            <person name="Sadowsky M."/>
        </authorList>
    </citation>
    <scope>NUCLEOTIDE SEQUENCE [LARGE SCALE GENOMIC DNA]</scope>
    <source>
        <strain>ORS 278</strain>
    </source>
</reference>
<dbReference type="EC" id="4.1.1.48" evidence="1"/>
<dbReference type="EMBL" id="CU234118">
    <property type="protein sequence ID" value="CAL77862.1"/>
    <property type="molecule type" value="Genomic_DNA"/>
</dbReference>
<dbReference type="RefSeq" id="WP_011926992.1">
    <property type="nucleotide sequence ID" value="NC_009445.1"/>
</dbReference>
<dbReference type="SMR" id="A4YVD6"/>
<dbReference type="STRING" id="114615.BRADO4110"/>
<dbReference type="KEGG" id="bra:BRADO4110"/>
<dbReference type="eggNOG" id="COG0134">
    <property type="taxonomic scope" value="Bacteria"/>
</dbReference>
<dbReference type="HOGENOM" id="CLU_034247_2_0_5"/>
<dbReference type="OrthoDB" id="9804217at2"/>
<dbReference type="UniPathway" id="UPA00035">
    <property type="reaction ID" value="UER00043"/>
</dbReference>
<dbReference type="Proteomes" id="UP000001994">
    <property type="component" value="Chromosome"/>
</dbReference>
<dbReference type="GO" id="GO:0004425">
    <property type="term" value="F:indole-3-glycerol-phosphate synthase activity"/>
    <property type="evidence" value="ECO:0007669"/>
    <property type="project" value="UniProtKB-UniRule"/>
</dbReference>
<dbReference type="GO" id="GO:0004640">
    <property type="term" value="F:phosphoribosylanthranilate isomerase activity"/>
    <property type="evidence" value="ECO:0007669"/>
    <property type="project" value="TreeGrafter"/>
</dbReference>
<dbReference type="GO" id="GO:0000162">
    <property type="term" value="P:L-tryptophan biosynthetic process"/>
    <property type="evidence" value="ECO:0007669"/>
    <property type="project" value="UniProtKB-UniRule"/>
</dbReference>
<dbReference type="CDD" id="cd00331">
    <property type="entry name" value="IGPS"/>
    <property type="match status" value="1"/>
</dbReference>
<dbReference type="FunFam" id="3.20.20.70:FF:000024">
    <property type="entry name" value="Indole-3-glycerol phosphate synthase"/>
    <property type="match status" value="1"/>
</dbReference>
<dbReference type="Gene3D" id="3.20.20.70">
    <property type="entry name" value="Aldolase class I"/>
    <property type="match status" value="1"/>
</dbReference>
<dbReference type="HAMAP" id="MF_00134_B">
    <property type="entry name" value="IGPS_B"/>
    <property type="match status" value="1"/>
</dbReference>
<dbReference type="InterPro" id="IPR013785">
    <property type="entry name" value="Aldolase_TIM"/>
</dbReference>
<dbReference type="InterPro" id="IPR045186">
    <property type="entry name" value="Indole-3-glycerol_P_synth"/>
</dbReference>
<dbReference type="InterPro" id="IPR013798">
    <property type="entry name" value="Indole-3-glycerol_P_synth_dom"/>
</dbReference>
<dbReference type="InterPro" id="IPR001468">
    <property type="entry name" value="Indole-3-GlycerolPSynthase_CS"/>
</dbReference>
<dbReference type="InterPro" id="IPR011060">
    <property type="entry name" value="RibuloseP-bd_barrel"/>
</dbReference>
<dbReference type="NCBIfam" id="NF001370">
    <property type="entry name" value="PRK00278.1-2"/>
    <property type="match status" value="1"/>
</dbReference>
<dbReference type="NCBIfam" id="NF001373">
    <property type="entry name" value="PRK00278.1-6"/>
    <property type="match status" value="1"/>
</dbReference>
<dbReference type="NCBIfam" id="NF001377">
    <property type="entry name" value="PRK00278.2-4"/>
    <property type="match status" value="1"/>
</dbReference>
<dbReference type="PANTHER" id="PTHR22854:SF2">
    <property type="entry name" value="INDOLE-3-GLYCEROL-PHOSPHATE SYNTHASE"/>
    <property type="match status" value="1"/>
</dbReference>
<dbReference type="PANTHER" id="PTHR22854">
    <property type="entry name" value="TRYPTOPHAN BIOSYNTHESIS PROTEIN"/>
    <property type="match status" value="1"/>
</dbReference>
<dbReference type="Pfam" id="PF00218">
    <property type="entry name" value="IGPS"/>
    <property type="match status" value="1"/>
</dbReference>
<dbReference type="SUPFAM" id="SSF51366">
    <property type="entry name" value="Ribulose-phoshate binding barrel"/>
    <property type="match status" value="1"/>
</dbReference>
<dbReference type="PROSITE" id="PS00614">
    <property type="entry name" value="IGPS"/>
    <property type="match status" value="1"/>
</dbReference>
<accession>A4YVD6</accession>
<name>TRPC_BRASO</name>
<organism>
    <name type="scientific">Bradyrhizobium sp. (strain ORS 278)</name>
    <dbReference type="NCBI Taxonomy" id="114615"/>
    <lineage>
        <taxon>Bacteria</taxon>
        <taxon>Pseudomonadati</taxon>
        <taxon>Pseudomonadota</taxon>
        <taxon>Alphaproteobacteria</taxon>
        <taxon>Hyphomicrobiales</taxon>
        <taxon>Nitrobacteraceae</taxon>
        <taxon>Bradyrhizobium</taxon>
    </lineage>
</organism>
<feature type="chain" id="PRO_1000018447" description="Indole-3-glycerol phosphate synthase">
    <location>
        <begin position="1"/>
        <end position="272"/>
    </location>
</feature>